<organism>
    <name type="scientific">Alisma canaliculatum</name>
    <name type="common">Water plantain</name>
    <dbReference type="NCBI Taxonomy" id="120010"/>
    <lineage>
        <taxon>Eukaryota</taxon>
        <taxon>Viridiplantae</taxon>
        <taxon>Streptophyta</taxon>
        <taxon>Embryophyta</taxon>
        <taxon>Tracheophyta</taxon>
        <taxon>Spermatophyta</taxon>
        <taxon>Magnoliopsida</taxon>
        <taxon>Liliopsida</taxon>
        <taxon>Alismataceae</taxon>
        <taxon>Alisma</taxon>
    </lineage>
</organism>
<keyword id="KW-0150">Chloroplast</keyword>
<keyword id="KW-0507">mRNA processing</keyword>
<keyword id="KW-0934">Plastid</keyword>
<keyword id="KW-0694">RNA-binding</keyword>
<keyword id="KW-0819">tRNA processing</keyword>
<feature type="chain" id="PRO_0000143219" description="Maturase K">
    <location>
        <begin position="1"/>
        <end position="512"/>
    </location>
</feature>
<evidence type="ECO:0000255" key="1">
    <source>
        <dbReference type="HAMAP-Rule" id="MF_01390"/>
    </source>
</evidence>
<name>MATK_ALICA</name>
<protein>
    <recommendedName>
        <fullName evidence="1">Maturase K</fullName>
    </recommendedName>
    <alternativeName>
        <fullName evidence="1">Intron maturase</fullName>
    </alternativeName>
</protein>
<accession>Q9GHE4</accession>
<geneLocation type="chloroplast"/>
<proteinExistence type="inferred from homology"/>
<reference key="1">
    <citation type="journal article" date="2000" name="Plant Biol.">
        <title>A phylogenetic analysis of the plastid matK gene with emphasis on Melanthiaceae sensu lato.</title>
        <authorList>
            <person name="Fuse S."/>
            <person name="Tamura M.N."/>
        </authorList>
    </citation>
    <scope>NUCLEOTIDE SEQUENCE [GENOMIC DNA]</scope>
</reference>
<sequence>MEELKKYLERDRYWQQHFLYPLLFQEYIYALAHIHNRGLNGSIFYESGEILGYDNKSSFILVKRLILRMYQQNFEIHSSNESHKNRFVGHNNPFFSKMIWGGFAVIVEIPFSLPSLIEEKKKEIPKSQNLRSIHSXFPFLXDQFSHLNYVSDIRIPYPIHLEILIQIIQSWIQDVPSLHLLRFFLYEYHNWNCFITLKKSLSIFAKGNPRLFWFLYNSYVSEYESVFCFLRKQSSYLLSTSYRNLIERTHFYGKMEHLAVVCCNCFHKTLQLFKDPCIHYVRYQGKSILASKGTYLLMKKWKCYLVNFWECHFSFWSQPYRIHINQLSNNSFDFLGYFSIVLINPLTVRXQMLEYSCLIDNTATKKFDTIVPIIPLIGSLSKAKFCNVSGHPISKPIWTDLSDSDIIDRFVRICRNLSHYHSGSSKKQSLYRMKYILRLSCARTLARKHKTTVRAFFQRLGSGFLEEFFAEEQKFLSLVLPGIPLASGSDRVYKERIWYLDIIRINDLVNYS</sequence>
<gene>
    <name evidence="1" type="primary">matK</name>
</gene>
<dbReference type="EMBL" id="AB040179">
    <property type="protein sequence ID" value="BAB16787.1"/>
    <property type="molecule type" value="Genomic_DNA"/>
</dbReference>
<dbReference type="GO" id="GO:0009507">
    <property type="term" value="C:chloroplast"/>
    <property type="evidence" value="ECO:0007669"/>
    <property type="project" value="UniProtKB-SubCell"/>
</dbReference>
<dbReference type="GO" id="GO:0003723">
    <property type="term" value="F:RNA binding"/>
    <property type="evidence" value="ECO:0007669"/>
    <property type="project" value="UniProtKB-KW"/>
</dbReference>
<dbReference type="GO" id="GO:0006397">
    <property type="term" value="P:mRNA processing"/>
    <property type="evidence" value="ECO:0007669"/>
    <property type="project" value="UniProtKB-KW"/>
</dbReference>
<dbReference type="GO" id="GO:0008380">
    <property type="term" value="P:RNA splicing"/>
    <property type="evidence" value="ECO:0007669"/>
    <property type="project" value="UniProtKB-UniRule"/>
</dbReference>
<dbReference type="GO" id="GO:0008033">
    <property type="term" value="P:tRNA processing"/>
    <property type="evidence" value="ECO:0007669"/>
    <property type="project" value="UniProtKB-KW"/>
</dbReference>
<dbReference type="HAMAP" id="MF_01390">
    <property type="entry name" value="MatK"/>
    <property type="match status" value="1"/>
</dbReference>
<dbReference type="InterPro" id="IPR024937">
    <property type="entry name" value="Domain_X"/>
</dbReference>
<dbReference type="InterPro" id="IPR002866">
    <property type="entry name" value="Maturase_MatK"/>
</dbReference>
<dbReference type="InterPro" id="IPR024942">
    <property type="entry name" value="Maturase_MatK_N"/>
</dbReference>
<dbReference type="PANTHER" id="PTHR34811">
    <property type="entry name" value="MATURASE K"/>
    <property type="match status" value="1"/>
</dbReference>
<dbReference type="PANTHER" id="PTHR34811:SF1">
    <property type="entry name" value="MATURASE K"/>
    <property type="match status" value="1"/>
</dbReference>
<dbReference type="Pfam" id="PF01348">
    <property type="entry name" value="Intron_maturas2"/>
    <property type="match status" value="1"/>
</dbReference>
<dbReference type="Pfam" id="PF01824">
    <property type="entry name" value="MatK_N"/>
    <property type="match status" value="1"/>
</dbReference>
<comment type="function">
    <text evidence="1">Usually encoded in the trnK tRNA gene intron. Probably assists in splicing its own and other chloroplast group II introns.</text>
</comment>
<comment type="subcellular location">
    <subcellularLocation>
        <location>Plastid</location>
        <location>Chloroplast</location>
    </subcellularLocation>
</comment>
<comment type="similarity">
    <text evidence="1">Belongs to the intron maturase 2 family. MatK subfamily.</text>
</comment>